<accession>Q87A33</accession>
<reference key="1">
    <citation type="journal article" date="2003" name="J. Bacteriol.">
        <title>Comparative analyses of the complete genome sequences of Pierce's disease and citrus variegated chlorosis strains of Xylella fastidiosa.</title>
        <authorList>
            <person name="Van Sluys M.A."/>
            <person name="de Oliveira M.C."/>
            <person name="Monteiro-Vitorello C.B."/>
            <person name="Miyaki C.Y."/>
            <person name="Furlan L.R."/>
            <person name="Camargo L.E.A."/>
            <person name="da Silva A.C.R."/>
            <person name="Moon D.H."/>
            <person name="Takita M.A."/>
            <person name="Lemos E.G.M."/>
            <person name="Machado M.A."/>
            <person name="Ferro M.I.T."/>
            <person name="da Silva F.R."/>
            <person name="Goldman M.H.S."/>
            <person name="Goldman G.H."/>
            <person name="Lemos M.V.F."/>
            <person name="El-Dorry H."/>
            <person name="Tsai S.M."/>
            <person name="Carrer H."/>
            <person name="Carraro D.M."/>
            <person name="de Oliveira R.C."/>
            <person name="Nunes L.R."/>
            <person name="Siqueira W.J."/>
            <person name="Coutinho L.L."/>
            <person name="Kimura E.T."/>
            <person name="Ferro E.S."/>
            <person name="Harakava R."/>
            <person name="Kuramae E.E."/>
            <person name="Marino C.L."/>
            <person name="Giglioti E."/>
            <person name="Abreu I.L."/>
            <person name="Alves L.M.C."/>
            <person name="do Amaral A.M."/>
            <person name="Baia G.S."/>
            <person name="Blanco S.R."/>
            <person name="Brito M.S."/>
            <person name="Cannavan F.S."/>
            <person name="Celestino A.V."/>
            <person name="da Cunha A.F."/>
            <person name="Fenille R.C."/>
            <person name="Ferro J.A."/>
            <person name="Formighieri E.F."/>
            <person name="Kishi L.T."/>
            <person name="Leoni S.G."/>
            <person name="Oliveira A.R."/>
            <person name="Rosa V.E. Jr."/>
            <person name="Sassaki F.T."/>
            <person name="Sena J.A.D."/>
            <person name="de Souza A.A."/>
            <person name="Truffi D."/>
            <person name="Tsukumo F."/>
            <person name="Yanai G.M."/>
            <person name="Zaros L.G."/>
            <person name="Civerolo E.L."/>
            <person name="Simpson A.J.G."/>
            <person name="Almeida N.F. Jr."/>
            <person name="Setubal J.C."/>
            <person name="Kitajima J.P."/>
        </authorList>
    </citation>
    <scope>NUCLEOTIDE SEQUENCE [LARGE SCALE GENOMIC DNA]</scope>
    <source>
        <strain>Temecula1 / ATCC 700964</strain>
    </source>
</reference>
<feature type="chain" id="PRO_0000067838" description="DNA-directed RNA polymerase subunit beta'">
    <location>
        <begin position="1"/>
        <end position="1407"/>
    </location>
</feature>
<feature type="region of interest" description="Disordered" evidence="2">
    <location>
        <begin position="1384"/>
        <end position="1407"/>
    </location>
</feature>
<feature type="compositionally biased region" description="Polar residues" evidence="2">
    <location>
        <begin position="1386"/>
        <end position="1399"/>
    </location>
</feature>
<feature type="binding site" evidence="1">
    <location>
        <position position="70"/>
    </location>
    <ligand>
        <name>Zn(2+)</name>
        <dbReference type="ChEBI" id="CHEBI:29105"/>
        <label>1</label>
    </ligand>
</feature>
<feature type="binding site" evidence="1">
    <location>
        <position position="72"/>
    </location>
    <ligand>
        <name>Zn(2+)</name>
        <dbReference type="ChEBI" id="CHEBI:29105"/>
        <label>1</label>
    </ligand>
</feature>
<feature type="binding site" evidence="1">
    <location>
        <position position="85"/>
    </location>
    <ligand>
        <name>Zn(2+)</name>
        <dbReference type="ChEBI" id="CHEBI:29105"/>
        <label>1</label>
    </ligand>
</feature>
<feature type="binding site" evidence="1">
    <location>
        <position position="88"/>
    </location>
    <ligand>
        <name>Zn(2+)</name>
        <dbReference type="ChEBI" id="CHEBI:29105"/>
        <label>1</label>
    </ligand>
</feature>
<feature type="binding site" evidence="1">
    <location>
        <position position="460"/>
    </location>
    <ligand>
        <name>Mg(2+)</name>
        <dbReference type="ChEBI" id="CHEBI:18420"/>
    </ligand>
</feature>
<feature type="binding site" evidence="1">
    <location>
        <position position="462"/>
    </location>
    <ligand>
        <name>Mg(2+)</name>
        <dbReference type="ChEBI" id="CHEBI:18420"/>
    </ligand>
</feature>
<feature type="binding site" evidence="1">
    <location>
        <position position="464"/>
    </location>
    <ligand>
        <name>Mg(2+)</name>
        <dbReference type="ChEBI" id="CHEBI:18420"/>
    </ligand>
</feature>
<feature type="binding site" evidence="1">
    <location>
        <position position="814"/>
    </location>
    <ligand>
        <name>Zn(2+)</name>
        <dbReference type="ChEBI" id="CHEBI:29105"/>
        <label>2</label>
    </ligand>
</feature>
<feature type="binding site" evidence="1">
    <location>
        <position position="889"/>
    </location>
    <ligand>
        <name>Zn(2+)</name>
        <dbReference type="ChEBI" id="CHEBI:29105"/>
        <label>2</label>
    </ligand>
</feature>
<feature type="binding site" evidence="1">
    <location>
        <position position="896"/>
    </location>
    <ligand>
        <name>Zn(2+)</name>
        <dbReference type="ChEBI" id="CHEBI:29105"/>
        <label>2</label>
    </ligand>
</feature>
<feature type="binding site" evidence="1">
    <location>
        <position position="899"/>
    </location>
    <ligand>
        <name>Zn(2+)</name>
        <dbReference type="ChEBI" id="CHEBI:29105"/>
        <label>2</label>
    </ligand>
</feature>
<name>RPOC_XYLFT</name>
<organism>
    <name type="scientific">Xylella fastidiosa (strain Temecula1 / ATCC 700964)</name>
    <dbReference type="NCBI Taxonomy" id="183190"/>
    <lineage>
        <taxon>Bacteria</taxon>
        <taxon>Pseudomonadati</taxon>
        <taxon>Pseudomonadota</taxon>
        <taxon>Gammaproteobacteria</taxon>
        <taxon>Lysobacterales</taxon>
        <taxon>Lysobacteraceae</taxon>
        <taxon>Xylella</taxon>
    </lineage>
</organism>
<gene>
    <name evidence="1" type="primary">rpoC</name>
    <name type="ordered locus">PD_2000</name>
</gene>
<comment type="function">
    <text evidence="1">DNA-dependent RNA polymerase catalyzes the transcription of DNA into RNA using the four ribonucleoside triphosphates as substrates.</text>
</comment>
<comment type="catalytic activity">
    <reaction evidence="1">
        <text>RNA(n) + a ribonucleoside 5'-triphosphate = RNA(n+1) + diphosphate</text>
        <dbReference type="Rhea" id="RHEA:21248"/>
        <dbReference type="Rhea" id="RHEA-COMP:14527"/>
        <dbReference type="Rhea" id="RHEA-COMP:17342"/>
        <dbReference type="ChEBI" id="CHEBI:33019"/>
        <dbReference type="ChEBI" id="CHEBI:61557"/>
        <dbReference type="ChEBI" id="CHEBI:140395"/>
        <dbReference type="EC" id="2.7.7.6"/>
    </reaction>
</comment>
<comment type="cofactor">
    <cofactor evidence="1">
        <name>Mg(2+)</name>
        <dbReference type="ChEBI" id="CHEBI:18420"/>
    </cofactor>
    <text evidence="1">Binds 1 Mg(2+) ion per subunit.</text>
</comment>
<comment type="cofactor">
    <cofactor evidence="1">
        <name>Zn(2+)</name>
        <dbReference type="ChEBI" id="CHEBI:29105"/>
    </cofactor>
    <text evidence="1">Binds 2 Zn(2+) ions per subunit.</text>
</comment>
<comment type="subunit">
    <text evidence="1">The RNAP catalytic core consists of 2 alpha, 1 beta, 1 beta' and 1 omega subunit. When a sigma factor is associated with the core the holoenzyme is formed, which can initiate transcription.</text>
</comment>
<comment type="similarity">
    <text evidence="1">Belongs to the RNA polymerase beta' chain family.</text>
</comment>
<keyword id="KW-0240">DNA-directed RNA polymerase</keyword>
<keyword id="KW-0460">Magnesium</keyword>
<keyword id="KW-0479">Metal-binding</keyword>
<keyword id="KW-0548">Nucleotidyltransferase</keyword>
<keyword id="KW-1185">Reference proteome</keyword>
<keyword id="KW-0804">Transcription</keyword>
<keyword id="KW-0808">Transferase</keyword>
<keyword id="KW-0862">Zinc</keyword>
<sequence>MKDLLNLFNQQRQTLDFDAIKIGLASPALIRSWSFGEVKKPETINYRTFKPERDGLFCAAIFGPIKDYECLCGKYKRMKHRGVVCEKCGTEVTLAKVRRERMGCIELASPVAHIWFLKSLPSRIGLMLDMTLRDIERVLYFEAYVVTEPGLTPLERRQLLTEEQYLQARQEHADDFDASMGAEAVYELLRMIDLQSEMARLREEIVVTGSETKLKRLTKRIKLIEAFIESGNRPEWMILTVLPVLPPDLRPLVPLDGGRFATSDLNDLYRRVINRNNRLCRLLELSAPDIIVRNEKRMLQESVDALLDNGRRGRAITGTNKRPLKSLADMIKGKQGRFRQNLLGKRVDYSARSVIIVGPNLRLHQCGLPKKMALELFKPFVFAKLQRRGLATTIKGAKKLVEREEAEVWDILEEVISEHPVVLNRAPTLHRQGIQAFEPVLIEGKAIQLHPLVCTAFNADFDGDQMAVHVPLSLEAQLEARALMMSTNNILSPANGEPIIVPSQDVVLGLYYMSRALENKKGEGMVFANTSELKRAYDNSVVELHAKVKVRITEIETDDQGLRNKASSIVDTTVGRALLSEILPEGLPFVLVNTEMTKKNISRLINSSYRMLGLKETVVFADKLMYTGYAYATRAGVSICIDDMLIPIEKKEILGEAEQEVLEIQEQYQSGLVTAGERYNKVVDIWSRTNERIAKAMMDTIGTERVVNADGEIVDQKSMNSLYIMADSGARGSPQQIRQLAAMRGLMVRPDGSIIETPIKANFREGLSVQEYFNSTHGARKGLADTALKTANSGYLTRRLVDVTQDLCVVQLDCGTAGGLTMTPIVEGGDVVEPLKDRVLGRVVAEDVLLPGNDDEPIVTRSTLLDEQWVAKLEEAGVQSVKVRSPITCESPFGVCALCYGRDLARGHLVNMGEAVGVIAAQSIGEPGTQLTMRTFHIGGTALSAAAIDNITVKTSGSVKFTNLKYVEHANGTLVAVSRSGEISVLDTHGRERERYKLPYGATINVKDMAEVKSGQILANWDPHNHPIVSEVAGFVRFIDFVDGVTVIEKTDDLTGLSSREIADLKRRGSQGKDLRPLVRIVDKKGNDLTIPGTDLSAQYLLPPRSIVNLQDGAPVGIGDVVAKIPQEASKTRDITGGLPRVADLFEARRPKDPAILAERSGVISFGKDTKGKQRLIIKDADGSEHEELIPKYRQIIVFEGEHVTKGETIVDGEPSPQDILRLLGIEPLAAYLVKEIQDVYRLQGVKINDKHIEVITRQMLRKVEIVDQGNSKFLNGEQVERQRVIDENAKLIARNELPAKYNPVLLGITKASLATESFISAASFQETTRVLTEAAVRGTRDNLRGLKENVIVGRLIPAGTGQTYHSQRRYSSVGLTESEMETLVGRSTSSGTEVTSPSKDAIPLGG</sequence>
<protein>
    <recommendedName>
        <fullName evidence="1">DNA-directed RNA polymerase subunit beta'</fullName>
        <shortName evidence="1">RNAP subunit beta'</shortName>
        <ecNumber evidence="1">2.7.7.6</ecNumber>
    </recommendedName>
    <alternativeName>
        <fullName evidence="1">RNA polymerase subunit beta'</fullName>
    </alternativeName>
    <alternativeName>
        <fullName evidence="1">Transcriptase subunit beta'</fullName>
    </alternativeName>
</protein>
<proteinExistence type="inferred from homology"/>
<evidence type="ECO:0000255" key="1">
    <source>
        <dbReference type="HAMAP-Rule" id="MF_01322"/>
    </source>
</evidence>
<evidence type="ECO:0000256" key="2">
    <source>
        <dbReference type="SAM" id="MobiDB-lite"/>
    </source>
</evidence>
<dbReference type="EC" id="2.7.7.6" evidence="1"/>
<dbReference type="EMBL" id="AE009442">
    <property type="protein sequence ID" value="AAO29829.1"/>
    <property type="molecule type" value="Genomic_DNA"/>
</dbReference>
<dbReference type="RefSeq" id="WP_011098326.1">
    <property type="nucleotide sequence ID" value="NC_004556.1"/>
</dbReference>
<dbReference type="SMR" id="Q87A33"/>
<dbReference type="KEGG" id="xft:PD_2000"/>
<dbReference type="HOGENOM" id="CLU_000524_3_1_6"/>
<dbReference type="Proteomes" id="UP000002516">
    <property type="component" value="Chromosome"/>
</dbReference>
<dbReference type="GO" id="GO:0000428">
    <property type="term" value="C:DNA-directed RNA polymerase complex"/>
    <property type="evidence" value="ECO:0007669"/>
    <property type="project" value="UniProtKB-KW"/>
</dbReference>
<dbReference type="GO" id="GO:0003677">
    <property type="term" value="F:DNA binding"/>
    <property type="evidence" value="ECO:0007669"/>
    <property type="project" value="UniProtKB-UniRule"/>
</dbReference>
<dbReference type="GO" id="GO:0003899">
    <property type="term" value="F:DNA-directed RNA polymerase activity"/>
    <property type="evidence" value="ECO:0007669"/>
    <property type="project" value="UniProtKB-UniRule"/>
</dbReference>
<dbReference type="GO" id="GO:0000287">
    <property type="term" value="F:magnesium ion binding"/>
    <property type="evidence" value="ECO:0007669"/>
    <property type="project" value="UniProtKB-UniRule"/>
</dbReference>
<dbReference type="GO" id="GO:0008270">
    <property type="term" value="F:zinc ion binding"/>
    <property type="evidence" value="ECO:0007669"/>
    <property type="project" value="UniProtKB-UniRule"/>
</dbReference>
<dbReference type="GO" id="GO:0006351">
    <property type="term" value="P:DNA-templated transcription"/>
    <property type="evidence" value="ECO:0007669"/>
    <property type="project" value="UniProtKB-UniRule"/>
</dbReference>
<dbReference type="CDD" id="cd02655">
    <property type="entry name" value="RNAP_beta'_C"/>
    <property type="match status" value="1"/>
</dbReference>
<dbReference type="CDD" id="cd01609">
    <property type="entry name" value="RNAP_beta'_N"/>
    <property type="match status" value="1"/>
</dbReference>
<dbReference type="FunFam" id="1.10.132.30:FF:000003">
    <property type="entry name" value="DNA-directed RNA polymerase subunit beta"/>
    <property type="match status" value="1"/>
</dbReference>
<dbReference type="FunFam" id="1.10.150.390:FF:000002">
    <property type="entry name" value="DNA-directed RNA polymerase subunit beta"/>
    <property type="match status" value="1"/>
</dbReference>
<dbReference type="Gene3D" id="1.10.132.30">
    <property type="match status" value="1"/>
</dbReference>
<dbReference type="Gene3D" id="1.10.150.390">
    <property type="match status" value="1"/>
</dbReference>
<dbReference type="Gene3D" id="1.10.1790.20">
    <property type="match status" value="1"/>
</dbReference>
<dbReference type="Gene3D" id="1.10.40.90">
    <property type="match status" value="1"/>
</dbReference>
<dbReference type="Gene3D" id="2.40.40.20">
    <property type="match status" value="1"/>
</dbReference>
<dbReference type="Gene3D" id="2.40.50.100">
    <property type="match status" value="3"/>
</dbReference>
<dbReference type="Gene3D" id="4.10.860.120">
    <property type="entry name" value="RNA polymerase II, clamp domain"/>
    <property type="match status" value="1"/>
</dbReference>
<dbReference type="Gene3D" id="1.10.274.100">
    <property type="entry name" value="RNA polymerase Rpb1, domain 3"/>
    <property type="match status" value="1"/>
</dbReference>
<dbReference type="HAMAP" id="MF_01322">
    <property type="entry name" value="RNApol_bact_RpoC"/>
    <property type="match status" value="1"/>
</dbReference>
<dbReference type="InterPro" id="IPR045867">
    <property type="entry name" value="DNA-dir_RpoC_beta_prime"/>
</dbReference>
<dbReference type="InterPro" id="IPR012754">
    <property type="entry name" value="DNA-dir_RpoC_beta_prime_bact"/>
</dbReference>
<dbReference type="InterPro" id="IPR000722">
    <property type="entry name" value="RNA_pol_asu"/>
</dbReference>
<dbReference type="InterPro" id="IPR006592">
    <property type="entry name" value="RNA_pol_N"/>
</dbReference>
<dbReference type="InterPro" id="IPR007080">
    <property type="entry name" value="RNA_pol_Rpb1_1"/>
</dbReference>
<dbReference type="InterPro" id="IPR007066">
    <property type="entry name" value="RNA_pol_Rpb1_3"/>
</dbReference>
<dbReference type="InterPro" id="IPR042102">
    <property type="entry name" value="RNA_pol_Rpb1_3_sf"/>
</dbReference>
<dbReference type="InterPro" id="IPR007083">
    <property type="entry name" value="RNA_pol_Rpb1_4"/>
</dbReference>
<dbReference type="InterPro" id="IPR007081">
    <property type="entry name" value="RNA_pol_Rpb1_5"/>
</dbReference>
<dbReference type="InterPro" id="IPR044893">
    <property type="entry name" value="RNA_pol_Rpb1_clamp_domain"/>
</dbReference>
<dbReference type="InterPro" id="IPR038120">
    <property type="entry name" value="Rpb1_funnel_sf"/>
</dbReference>
<dbReference type="NCBIfam" id="TIGR02386">
    <property type="entry name" value="rpoC_TIGR"/>
    <property type="match status" value="1"/>
</dbReference>
<dbReference type="PANTHER" id="PTHR19376">
    <property type="entry name" value="DNA-DIRECTED RNA POLYMERASE"/>
    <property type="match status" value="1"/>
</dbReference>
<dbReference type="PANTHER" id="PTHR19376:SF54">
    <property type="entry name" value="DNA-DIRECTED RNA POLYMERASE SUBUNIT BETA"/>
    <property type="match status" value="1"/>
</dbReference>
<dbReference type="Pfam" id="PF04997">
    <property type="entry name" value="RNA_pol_Rpb1_1"/>
    <property type="match status" value="1"/>
</dbReference>
<dbReference type="Pfam" id="PF00623">
    <property type="entry name" value="RNA_pol_Rpb1_2"/>
    <property type="match status" value="2"/>
</dbReference>
<dbReference type="Pfam" id="PF04983">
    <property type="entry name" value="RNA_pol_Rpb1_3"/>
    <property type="match status" value="1"/>
</dbReference>
<dbReference type="Pfam" id="PF05000">
    <property type="entry name" value="RNA_pol_Rpb1_4"/>
    <property type="match status" value="1"/>
</dbReference>
<dbReference type="Pfam" id="PF04998">
    <property type="entry name" value="RNA_pol_Rpb1_5"/>
    <property type="match status" value="1"/>
</dbReference>
<dbReference type="SMART" id="SM00663">
    <property type="entry name" value="RPOLA_N"/>
    <property type="match status" value="1"/>
</dbReference>
<dbReference type="SUPFAM" id="SSF64484">
    <property type="entry name" value="beta and beta-prime subunits of DNA dependent RNA-polymerase"/>
    <property type="match status" value="1"/>
</dbReference>